<name>OLD8_ECOLX</name>
<proteinExistence type="evidence at protein level"/>
<comment type="function">
    <text evidence="2">Probable nuclease member of antiviral defense system retron Eco8, composed of an reverse transcriptase (RT), this nuclease and a non-coding RNA (ncRNA) encoded between them. Expression of retron Eco8 confers protection against bacteriophages T4, T6, T7 and SECphi4, SECphi6 and SECphi18. At multiplicity of infection (MOI) of 0.02 cultures slow growth when infected with SECphi4 but do not collapse, at MOI 2 cultures collapse. When the retron is cloned in another E.coli strain synthesizes msDNA (a branched RNA linked by a 2',5'-phosphodiester bond to a single-stranded DNA). The retron transcript serves as primer and template to the reaction, and codes for the RT.</text>
</comment>
<comment type="cofactor">
    <cofactor evidence="1">
        <name>a divalent metal cation</name>
        <dbReference type="ChEBI" id="CHEBI:60240"/>
    </cofactor>
    <text evidence="1">Probably binds 2 metal cations.</text>
</comment>
<comment type="subunit">
    <text evidence="1">Homodimer.</text>
</comment>
<comment type="similarity">
    <text evidence="6">Belongs to the class 1 OLD nuclease family.</text>
</comment>
<gene>
    <name evidence="3" type="primary">old</name>
    <name evidence="4" type="ORF">ERS139198_01420</name>
    <name type="ORF">Ga0119705_103344</name>
</gene>
<accession>P0DV58</accession>
<sequence>MTIESIRVKNLLSFDDVILRDFRDINCIIGRNNVGKSNLLKVIRYFYAKLENKKVIPLDFHTNYNAVGEITFTFDTTRIKKIVTSRKNNGRFHKHIYNTLFKSSSVKLNFEELIARKNSTNKSFFSLTLTICKDDSVMWSVDDPKVRSLLATLYPFLYIETRHIDLYDWNPIWKLISNLNSFNFDDVDHDELVNFLDEKISSRKGDYKKYIDRVVSVIDTKPYTYKEKVINYIKVAIKGDSFVNAGEELFTQSDGTNSNKFLETLLHLLITLTRTEFISPIVYIDEPEVGLHPKLAESFVSNLNKIYSKFKKTSELSGPGRYKTPYPNIFYSTHSPSILKQTIKLFGKDQQVLHFSKKKDGSTRVNKINSTYSDERFLNIFSDNEARLFFSEYIVFVEGATELELFRNLSLLNLYPAFSLADIYDANEVILANINPGYSKASIPFVIIKDIDTLIDYSIKTEKFSLRPLFEKMIKELTKEFDYYDTGFGRVRKEIDLFSDIQSSTKKHMDSGLFFKRFSLHNLSSRINKVSRKLNRYFMTTTIEGALINEQSLPYFFNWIGDVILTQMTINNPNPDKFIEAMRRRYNIKSQVVPLFKSVFCIGLNHPVYSSAVDKQALRIKLSFLNYLKRKVYSDFNNEKEIVLALRLAFGGKTETQYTLDKLRKDGEAELFREKIKNYKNNELFFLEPQMTKTSGWVTTFLNYTIEKITSEESDDDRIRQKLSFIFPEIISIIEQASSSIEAEESSLTG</sequence>
<protein>
    <recommendedName>
        <fullName evidence="3">Retron Eco8 OLD nuclease</fullName>
        <ecNumber evidence="5">3.1.-.-</ecNumber>
    </recommendedName>
</protein>
<reference evidence="7" key="1">
    <citation type="submission" date="2015-08" db="EMBL/GenBank/DDBJ databases">
        <authorList>
            <person name="Babu N.S."/>
            <person name="Beckwith C.J."/>
            <person name="Beseler K.G."/>
            <person name="Brison A."/>
            <person name="Carone J.V."/>
            <person name="Caskin T.P."/>
            <person name="Diamond M."/>
            <person name="Durham M.E."/>
            <person name="Foxe J.M."/>
            <person name="Go M."/>
            <person name="Henderson B.A."/>
            <person name="Jones I.B."/>
            <person name="McGettigan J.A."/>
            <person name="Micheletti S.J."/>
            <person name="Nasrallah M.E."/>
            <person name="Ortiz D."/>
            <person name="Piller C.R."/>
            <person name="Privatt S.R."/>
            <person name="Schneider S.L."/>
            <person name="Sharp S."/>
            <person name="Smith T.C."/>
            <person name="Stanton J.D."/>
            <person name="Ullery H.E."/>
            <person name="Wilson R.J."/>
            <person name="Serrano M.G."/>
            <person name="Buck G."/>
            <person name="Lee V."/>
            <person name="Wang Y."/>
            <person name="Carvalho R."/>
            <person name="Voegtly L."/>
            <person name="Shi R."/>
            <person name="Duckworth R."/>
            <person name="Johnson A."/>
            <person name="Loviza R."/>
            <person name="Walstead R."/>
            <person name="Shah Z."/>
            <person name="Kiflezghi M."/>
            <person name="Wade K."/>
            <person name="Ball S.L."/>
            <person name="Bradley K.W."/>
            <person name="Asai D.J."/>
            <person name="Bowman C.A."/>
            <person name="Russell D.A."/>
            <person name="Pope W.H."/>
            <person name="Jacobs-Sera D."/>
            <person name="Hendrix R.W."/>
            <person name="Hatfull G.F."/>
        </authorList>
    </citation>
    <scope>NUCLEOTIDE SEQUENCE [LARGE SCALE GENOMIC DNA]</scope>
    <source>
        <strain>200499</strain>
    </source>
</reference>
<reference key="2">
    <citation type="journal article" date="2020" name="Cell">
        <title>Bacterial Retrons Function In Anti-Phage Defense.</title>
        <authorList>
            <person name="Millman A."/>
            <person name="Bernheim A."/>
            <person name="Stokar-Avihail A."/>
            <person name="Fedorenko T."/>
            <person name="Voichek M."/>
            <person name="Leavitt A."/>
            <person name="Oppenheimer-Shaanan Y."/>
            <person name="Sorek R."/>
        </authorList>
    </citation>
    <scope>FUNCTION IN ANTIVIRAL DEFENSE</scope>
    <scope>IDENTIFICATION AS A RETRON</scope>
    <scope>MUTAGENESIS OF LYS-36</scope>
    <source>
        <strain>200499</strain>
    </source>
</reference>
<keyword id="KW-0051">Antiviral defense</keyword>
<keyword id="KW-0067">ATP-binding</keyword>
<keyword id="KW-0378">Hydrolase</keyword>
<keyword id="KW-0479">Metal-binding</keyword>
<keyword id="KW-0540">Nuclease</keyword>
<keyword id="KW-0547">Nucleotide-binding</keyword>
<evidence type="ECO:0000250" key="1">
    <source>
        <dbReference type="UniProtKB" id="E8PLM2"/>
    </source>
</evidence>
<evidence type="ECO:0000269" key="2">
    <source>
    </source>
</evidence>
<evidence type="ECO:0000303" key="3">
    <source>
    </source>
</evidence>
<evidence type="ECO:0000303" key="4">
    <source ref="1"/>
</evidence>
<evidence type="ECO:0000305" key="5"/>
<evidence type="ECO:0000305" key="6">
    <source>
    </source>
</evidence>
<evidence type="ECO:0000312" key="7">
    <source>
        <dbReference type="EMBL" id="CUA03350.1"/>
    </source>
</evidence>
<dbReference type="EC" id="3.1.-.-" evidence="5"/>
<dbReference type="EMBL" id="CYGJ01000003">
    <property type="protein sequence ID" value="CUA03350.1"/>
    <property type="molecule type" value="Genomic_DNA"/>
</dbReference>
<dbReference type="RefSeq" id="WP_053898074.1">
    <property type="nucleotide sequence ID" value="NZ_CYGJ01000003.1"/>
</dbReference>
<dbReference type="GO" id="GO:0005524">
    <property type="term" value="F:ATP binding"/>
    <property type="evidence" value="ECO:0007669"/>
    <property type="project" value="UniProtKB-KW"/>
</dbReference>
<dbReference type="GO" id="GO:0016887">
    <property type="term" value="F:ATP hydrolysis activity"/>
    <property type="evidence" value="ECO:0007669"/>
    <property type="project" value="InterPro"/>
</dbReference>
<dbReference type="GO" id="GO:0046872">
    <property type="term" value="F:metal ion binding"/>
    <property type="evidence" value="ECO:0007669"/>
    <property type="project" value="UniProtKB-KW"/>
</dbReference>
<dbReference type="GO" id="GO:0004518">
    <property type="term" value="F:nuclease activity"/>
    <property type="evidence" value="ECO:0007669"/>
    <property type="project" value="UniProtKB-KW"/>
</dbReference>
<dbReference type="GO" id="GO:0051607">
    <property type="term" value="P:defense response to virus"/>
    <property type="evidence" value="ECO:0007669"/>
    <property type="project" value="UniProtKB-KW"/>
</dbReference>
<dbReference type="Gene3D" id="3.40.50.300">
    <property type="entry name" value="P-loop containing nucleotide triphosphate hydrolases"/>
    <property type="match status" value="1"/>
</dbReference>
<dbReference type="InterPro" id="IPR003959">
    <property type="entry name" value="ATPase_AAA_core"/>
</dbReference>
<dbReference type="InterPro" id="IPR051396">
    <property type="entry name" value="Bact_Antivir_Def_Nuclease"/>
</dbReference>
<dbReference type="InterPro" id="IPR027417">
    <property type="entry name" value="P-loop_NTPase"/>
</dbReference>
<dbReference type="NCBIfam" id="NF038234">
    <property type="entry name" value="retron_eff_Eco8"/>
    <property type="match status" value="1"/>
</dbReference>
<dbReference type="PANTHER" id="PTHR43581">
    <property type="entry name" value="ATP/GTP PHOSPHATASE"/>
    <property type="match status" value="1"/>
</dbReference>
<dbReference type="PANTHER" id="PTHR43581:SF4">
    <property type="entry name" value="ATP_GTP PHOSPHATASE"/>
    <property type="match status" value="1"/>
</dbReference>
<dbReference type="Pfam" id="PF13304">
    <property type="entry name" value="AAA_21"/>
    <property type="match status" value="1"/>
</dbReference>
<dbReference type="SUPFAM" id="SSF52540">
    <property type="entry name" value="P-loop containing nucleoside triphosphate hydrolases"/>
    <property type="match status" value="1"/>
</dbReference>
<organism>
    <name type="scientific">Escherichia coli</name>
    <dbReference type="NCBI Taxonomy" id="562"/>
    <lineage>
        <taxon>Bacteria</taxon>
        <taxon>Pseudomonadati</taxon>
        <taxon>Pseudomonadota</taxon>
        <taxon>Gammaproteobacteria</taxon>
        <taxon>Enterobacterales</taxon>
        <taxon>Enterobacteriaceae</taxon>
        <taxon>Escherichia</taxon>
    </lineage>
</organism>
<feature type="chain" id="PRO_0000456030" description="Retron Eco8 OLD nuclease">
    <location>
        <begin position="1"/>
        <end position="750"/>
    </location>
</feature>
<feature type="region of interest" description="ATPase domain N-terminus" evidence="1">
    <location>
        <begin position="1"/>
        <end position="173"/>
    </location>
</feature>
<feature type="region of interest" description="Dimerization domain" evidence="1">
    <location>
        <begin position="174"/>
        <end position="260"/>
    </location>
</feature>
<feature type="region of interest" description="ATPase domain C-terminus" evidence="1">
    <location>
        <begin position="261"/>
        <end position="390"/>
    </location>
</feature>
<feature type="region of interest" description="Toprim domain" evidence="1">
    <location>
        <begin position="391"/>
        <end position="704"/>
    </location>
</feature>
<feature type="binding site" evidence="1">
    <location>
        <begin position="33"/>
        <end position="37"/>
    </location>
    <ligand>
        <name>ATP</name>
        <dbReference type="ChEBI" id="CHEBI:30616"/>
    </ligand>
</feature>
<feature type="binding site" evidence="1">
    <location>
        <position position="398"/>
    </location>
    <ligand>
        <name>a divalent metal cation</name>
        <dbReference type="ChEBI" id="CHEBI:60240"/>
        <label>1</label>
    </ligand>
</feature>
<feature type="binding site" evidence="1">
    <location>
        <position position="402"/>
    </location>
    <ligand>
        <name>a divalent metal cation</name>
        <dbReference type="ChEBI" id="CHEBI:60240"/>
        <label>2</label>
    </ligand>
</feature>
<feature type="binding site" evidence="1">
    <location>
        <position position="450"/>
    </location>
    <ligand>
        <name>a divalent metal cation</name>
        <dbReference type="ChEBI" id="CHEBI:60240"/>
        <label>1</label>
    </ligand>
</feature>
<feature type="binding site" evidence="1">
    <location>
        <position position="452"/>
    </location>
    <ligand>
        <name>a divalent metal cation</name>
        <dbReference type="ChEBI" id="CHEBI:60240"/>
        <label>1</label>
    </ligand>
</feature>
<feature type="binding site" evidence="1">
    <location>
        <position position="623"/>
    </location>
    <ligand>
        <name>a divalent metal cation</name>
        <dbReference type="ChEBI" id="CHEBI:60240"/>
        <label>2</label>
    </ligand>
</feature>
<feature type="binding site" evidence="1">
    <location>
        <position position="641"/>
    </location>
    <ligand>
        <name>a divalent metal cation</name>
        <dbReference type="ChEBI" id="CHEBI:60240"/>
        <label>2</label>
    </ligand>
</feature>
<feature type="mutagenesis site" description="No longer protects against SECphi6 infection." evidence="2">
    <original>K</original>
    <variation>A</variation>
    <location>
        <position position="36"/>
    </location>
</feature>